<protein>
    <recommendedName>
        <fullName evidence="1">Chorismate synthase</fullName>
        <shortName evidence="1">CS</shortName>
        <ecNumber evidence="1">4.2.3.5</ecNumber>
    </recommendedName>
    <alternativeName>
        <fullName evidence="1">5-enolpyruvylshikimate-3-phosphate phospholyase</fullName>
    </alternativeName>
</protein>
<proteinExistence type="inferred from homology"/>
<reference key="1">
    <citation type="journal article" date="2000" name="Nature">
        <title>Complete genome sequence of Pseudomonas aeruginosa PAO1, an opportunistic pathogen.</title>
        <authorList>
            <person name="Stover C.K."/>
            <person name="Pham X.-Q.T."/>
            <person name="Erwin A.L."/>
            <person name="Mizoguchi S.D."/>
            <person name="Warrener P."/>
            <person name="Hickey M.J."/>
            <person name="Brinkman F.S.L."/>
            <person name="Hufnagle W.O."/>
            <person name="Kowalik D.J."/>
            <person name="Lagrou M."/>
            <person name="Garber R.L."/>
            <person name="Goltry L."/>
            <person name="Tolentino E."/>
            <person name="Westbrock-Wadman S."/>
            <person name="Yuan Y."/>
            <person name="Brody L.L."/>
            <person name="Coulter S.N."/>
            <person name="Folger K.R."/>
            <person name="Kas A."/>
            <person name="Larbig K."/>
            <person name="Lim R.M."/>
            <person name="Smith K.A."/>
            <person name="Spencer D.H."/>
            <person name="Wong G.K.-S."/>
            <person name="Wu Z."/>
            <person name="Paulsen I.T."/>
            <person name="Reizer J."/>
            <person name="Saier M.H. Jr."/>
            <person name="Hancock R.E.W."/>
            <person name="Lory S."/>
            <person name="Olson M.V."/>
        </authorList>
    </citation>
    <scope>NUCLEOTIDE SEQUENCE [LARGE SCALE GENOMIC DNA]</scope>
    <source>
        <strain>ATCC 15692 / DSM 22644 / CIP 104116 / JCM 14847 / LMG 12228 / 1C / PRS 101 / PAO1</strain>
    </source>
</reference>
<accession>Q9I344</accession>
<feature type="chain" id="PRO_0000140631" description="Chorismate synthase">
    <location>
        <begin position="1"/>
        <end position="363"/>
    </location>
</feature>
<feature type="region of interest" description="Disordered" evidence="2">
    <location>
        <begin position="42"/>
        <end position="61"/>
    </location>
</feature>
<feature type="binding site" evidence="1">
    <location>
        <position position="48"/>
    </location>
    <ligand>
        <name>NADP(+)</name>
        <dbReference type="ChEBI" id="CHEBI:58349"/>
    </ligand>
</feature>
<feature type="binding site" evidence="1">
    <location>
        <position position="54"/>
    </location>
    <ligand>
        <name>NADP(+)</name>
        <dbReference type="ChEBI" id="CHEBI:58349"/>
    </ligand>
</feature>
<feature type="binding site" evidence="1">
    <location>
        <begin position="125"/>
        <end position="127"/>
    </location>
    <ligand>
        <name>FMN</name>
        <dbReference type="ChEBI" id="CHEBI:58210"/>
    </ligand>
</feature>
<feature type="binding site" evidence="1">
    <location>
        <begin position="237"/>
        <end position="238"/>
    </location>
    <ligand>
        <name>FMN</name>
        <dbReference type="ChEBI" id="CHEBI:58210"/>
    </ligand>
</feature>
<feature type="binding site" evidence="1">
    <location>
        <position position="277"/>
    </location>
    <ligand>
        <name>FMN</name>
        <dbReference type="ChEBI" id="CHEBI:58210"/>
    </ligand>
</feature>
<feature type="binding site" evidence="1">
    <location>
        <begin position="292"/>
        <end position="296"/>
    </location>
    <ligand>
        <name>FMN</name>
        <dbReference type="ChEBI" id="CHEBI:58210"/>
    </ligand>
</feature>
<feature type="binding site" evidence="1">
    <location>
        <position position="318"/>
    </location>
    <ligand>
        <name>FMN</name>
        <dbReference type="ChEBI" id="CHEBI:58210"/>
    </ligand>
</feature>
<dbReference type="EC" id="4.2.3.5" evidence="1"/>
<dbReference type="EMBL" id="AE004091">
    <property type="protein sequence ID" value="AAG05070.1"/>
    <property type="molecule type" value="Genomic_DNA"/>
</dbReference>
<dbReference type="PIR" id="B83436">
    <property type="entry name" value="B83436"/>
</dbReference>
<dbReference type="RefSeq" id="NP_250372.1">
    <property type="nucleotide sequence ID" value="NC_002516.2"/>
</dbReference>
<dbReference type="RefSeq" id="WP_003087653.1">
    <property type="nucleotide sequence ID" value="NZ_QZGE01000003.1"/>
</dbReference>
<dbReference type="SMR" id="Q9I344"/>
<dbReference type="FunCoup" id="Q9I344">
    <property type="interactions" value="609"/>
</dbReference>
<dbReference type="STRING" id="208964.PA1681"/>
<dbReference type="PaxDb" id="208964-PA1681"/>
<dbReference type="GeneID" id="879481"/>
<dbReference type="KEGG" id="pae:PA1681"/>
<dbReference type="PATRIC" id="fig|208964.12.peg.1742"/>
<dbReference type="PseudoCAP" id="PA1681"/>
<dbReference type="HOGENOM" id="CLU_034547_0_2_6"/>
<dbReference type="InParanoid" id="Q9I344"/>
<dbReference type="OrthoDB" id="9771806at2"/>
<dbReference type="PhylomeDB" id="Q9I344"/>
<dbReference type="BioCyc" id="PAER208964:G1FZ6-1712-MONOMER"/>
<dbReference type="UniPathway" id="UPA00053">
    <property type="reaction ID" value="UER00090"/>
</dbReference>
<dbReference type="Proteomes" id="UP000002438">
    <property type="component" value="Chromosome"/>
</dbReference>
<dbReference type="GO" id="GO:0005829">
    <property type="term" value="C:cytosol"/>
    <property type="evidence" value="ECO:0000318"/>
    <property type="project" value="GO_Central"/>
</dbReference>
<dbReference type="GO" id="GO:0004107">
    <property type="term" value="F:chorismate synthase activity"/>
    <property type="evidence" value="ECO:0000318"/>
    <property type="project" value="GO_Central"/>
</dbReference>
<dbReference type="GO" id="GO:0010181">
    <property type="term" value="F:FMN binding"/>
    <property type="evidence" value="ECO:0000318"/>
    <property type="project" value="GO_Central"/>
</dbReference>
<dbReference type="GO" id="GO:0008652">
    <property type="term" value="P:amino acid biosynthetic process"/>
    <property type="evidence" value="ECO:0007669"/>
    <property type="project" value="UniProtKB-KW"/>
</dbReference>
<dbReference type="GO" id="GO:0009073">
    <property type="term" value="P:aromatic amino acid family biosynthetic process"/>
    <property type="evidence" value="ECO:0000318"/>
    <property type="project" value="GO_Central"/>
</dbReference>
<dbReference type="GO" id="GO:0009423">
    <property type="term" value="P:chorismate biosynthetic process"/>
    <property type="evidence" value="ECO:0000318"/>
    <property type="project" value="GO_Central"/>
</dbReference>
<dbReference type="CDD" id="cd07304">
    <property type="entry name" value="Chorismate_synthase"/>
    <property type="match status" value="1"/>
</dbReference>
<dbReference type="FunFam" id="3.60.150.10:FF:000001">
    <property type="entry name" value="Chorismate synthase"/>
    <property type="match status" value="1"/>
</dbReference>
<dbReference type="Gene3D" id="3.60.150.10">
    <property type="entry name" value="Chorismate synthase AroC"/>
    <property type="match status" value="1"/>
</dbReference>
<dbReference type="HAMAP" id="MF_00300">
    <property type="entry name" value="Chorismate_synth"/>
    <property type="match status" value="1"/>
</dbReference>
<dbReference type="InterPro" id="IPR000453">
    <property type="entry name" value="Chorismate_synth"/>
</dbReference>
<dbReference type="InterPro" id="IPR035904">
    <property type="entry name" value="Chorismate_synth_AroC_sf"/>
</dbReference>
<dbReference type="InterPro" id="IPR020541">
    <property type="entry name" value="Chorismate_synthase_CS"/>
</dbReference>
<dbReference type="NCBIfam" id="TIGR00033">
    <property type="entry name" value="aroC"/>
    <property type="match status" value="1"/>
</dbReference>
<dbReference type="NCBIfam" id="NF003793">
    <property type="entry name" value="PRK05382.1"/>
    <property type="match status" value="1"/>
</dbReference>
<dbReference type="PANTHER" id="PTHR21085">
    <property type="entry name" value="CHORISMATE SYNTHASE"/>
    <property type="match status" value="1"/>
</dbReference>
<dbReference type="PANTHER" id="PTHR21085:SF0">
    <property type="entry name" value="CHORISMATE SYNTHASE"/>
    <property type="match status" value="1"/>
</dbReference>
<dbReference type="Pfam" id="PF01264">
    <property type="entry name" value="Chorismate_synt"/>
    <property type="match status" value="1"/>
</dbReference>
<dbReference type="PIRSF" id="PIRSF001456">
    <property type="entry name" value="Chorismate_synth"/>
    <property type="match status" value="1"/>
</dbReference>
<dbReference type="SUPFAM" id="SSF103263">
    <property type="entry name" value="Chorismate synthase, AroC"/>
    <property type="match status" value="1"/>
</dbReference>
<dbReference type="PROSITE" id="PS00787">
    <property type="entry name" value="CHORISMATE_SYNTHASE_1"/>
    <property type="match status" value="1"/>
</dbReference>
<dbReference type="PROSITE" id="PS00788">
    <property type="entry name" value="CHORISMATE_SYNTHASE_2"/>
    <property type="match status" value="1"/>
</dbReference>
<dbReference type="PROSITE" id="PS00789">
    <property type="entry name" value="CHORISMATE_SYNTHASE_3"/>
    <property type="match status" value="1"/>
</dbReference>
<keyword id="KW-0028">Amino-acid biosynthesis</keyword>
<keyword id="KW-0057">Aromatic amino acid biosynthesis</keyword>
<keyword id="KW-0274">FAD</keyword>
<keyword id="KW-0285">Flavoprotein</keyword>
<keyword id="KW-0288">FMN</keyword>
<keyword id="KW-0456">Lyase</keyword>
<keyword id="KW-0521">NADP</keyword>
<keyword id="KW-1185">Reference proteome</keyword>
<comment type="function">
    <text evidence="1">Catalyzes the anti-1,4-elimination of the C-3 phosphate and the C-6 proR hydrogen from 5-enolpyruvylshikimate-3-phosphate (EPSP) to yield chorismate, which is the branch point compound that serves as the starting substrate for the three terminal pathways of aromatic amino acid biosynthesis. This reaction introduces a second double bond into the aromatic ring system.</text>
</comment>
<comment type="catalytic activity">
    <reaction evidence="1">
        <text>5-O-(1-carboxyvinyl)-3-phosphoshikimate = chorismate + phosphate</text>
        <dbReference type="Rhea" id="RHEA:21020"/>
        <dbReference type="ChEBI" id="CHEBI:29748"/>
        <dbReference type="ChEBI" id="CHEBI:43474"/>
        <dbReference type="ChEBI" id="CHEBI:57701"/>
        <dbReference type="EC" id="4.2.3.5"/>
    </reaction>
</comment>
<comment type="cofactor">
    <cofactor evidence="1">
        <name>FMNH2</name>
        <dbReference type="ChEBI" id="CHEBI:57618"/>
    </cofactor>
    <text evidence="1">Reduced FMN (FMNH(2)).</text>
</comment>
<comment type="pathway">
    <text evidence="1">Metabolic intermediate biosynthesis; chorismate biosynthesis; chorismate from D-erythrose 4-phosphate and phosphoenolpyruvate: step 7/7.</text>
</comment>
<comment type="subunit">
    <text evidence="1">Homotetramer.</text>
</comment>
<comment type="similarity">
    <text evidence="1">Belongs to the chorismate synthase family.</text>
</comment>
<sequence length="363" mass="38987">MSGNTYGKLFTVTTAGESHGPALVAIVDGCPPGLELSARDLQRDLDRRKPGTSRHTTQRQEADEVEILSGVFEGKTTGTPIGLLIRNTDQKSKDYSAIKDLFRPAHADYTYHHKYGVRDYRGGGRSSARETAMRVAAGAIAKKYLAGLGIQVRGYMSQLGPIEIPFRSWDSVEQNAFFSPDPDKVPELEAYMDQLRRDQDSVGAKITVVAEGVPPGLGEPIFDRLDAELAHALMSINAVKGVEIGAGFASIAQRGTEHRDELTPQGFLSNNAGGILGGISSGQPIVAHLALKPTSSITTPGRSIDTAGEPVDMITKGRHDPCVGIRATPIAEAMMAIVLLDQLLRQRGQNADVRVDTPVLPQL</sequence>
<evidence type="ECO:0000255" key="1">
    <source>
        <dbReference type="HAMAP-Rule" id="MF_00300"/>
    </source>
</evidence>
<evidence type="ECO:0000256" key="2">
    <source>
        <dbReference type="SAM" id="MobiDB-lite"/>
    </source>
</evidence>
<name>AROC_PSEAE</name>
<organism>
    <name type="scientific">Pseudomonas aeruginosa (strain ATCC 15692 / DSM 22644 / CIP 104116 / JCM 14847 / LMG 12228 / 1C / PRS 101 / PAO1)</name>
    <dbReference type="NCBI Taxonomy" id="208964"/>
    <lineage>
        <taxon>Bacteria</taxon>
        <taxon>Pseudomonadati</taxon>
        <taxon>Pseudomonadota</taxon>
        <taxon>Gammaproteobacteria</taxon>
        <taxon>Pseudomonadales</taxon>
        <taxon>Pseudomonadaceae</taxon>
        <taxon>Pseudomonas</taxon>
    </lineage>
</organism>
<gene>
    <name evidence="1" type="primary">aroC</name>
    <name type="ordered locus">PA1681</name>
</gene>